<sequence length="400" mass="46571">MEDGVYEPPDLTPEERMELENIRRRKQELLVEIQRLREELSEAMSEVEGLEANEGSKTLQRNRKMAMGRKKFNMDPKKGIQFLVEHELLQNTPEEIARFLYKGEGLNKTAIGDYLGEREELNLSVLHAFVDLHEFTDLNLVQALRQFLWSFRLPGEAQKIDRMMEAFAQRYCLCNPGVFQSTDTCYVLSFAVIMLNTSLHNPNVRDKPGLERFVAMNRGINEGGDLPEDLLRNLYDSIRNEPFKIPEDDGNDLTHTFFNPDREGWLLKLGGGRVKTWKRRWFILTDNCLYYFEYTTDKEPRGIIPLENLSIREVDDPRKPNCFELYIPNNKGQLIKACKTEADGRVVEGNHMVYRISAPTQEEKDEWIKSIQAAVSVDPFYEMLAARKKRISVKKKQEQP</sequence>
<protein>
    <recommendedName>
        <fullName>Cytohesin-2</fullName>
    </recommendedName>
    <alternativeName>
        <fullName>ARF nucleotide-binding site opener</fullName>
        <shortName>Protein ARNO</shortName>
    </alternativeName>
    <alternativeName>
        <fullName>PH, SEC7 and coiled-coil domain-containing protein 2</fullName>
        <shortName>CLM2</shortName>
    </alternativeName>
    <alternativeName>
        <fullName>SEC7 homolog B</fullName>
    </alternativeName>
</protein>
<name>CYH2_RAT</name>
<reference key="1">
    <citation type="journal article" date="1997" name="Eur. J. Cell Biol.">
        <title>Rat homologues of yeast sec7p.</title>
        <authorList>
            <person name="Telemenakis I."/>
            <person name="Benseler F."/>
            <person name="Stenius K."/>
            <person name="Suedhof T.C."/>
            <person name="Brose N."/>
        </authorList>
    </citation>
    <scope>NUCLEOTIDE SEQUENCE [MRNA]</scope>
    <scope>TISSUE SPECIFICITY</scope>
</reference>
<reference key="2">
    <citation type="journal article" date="2002" name="J. Neurosci.">
        <title>Tamalin, a PDZ domain-containing protein, links a protein complex formation of group 1 metabotropic glutamate receptors and the guanine nucleotide exchange factor cytohesins.</title>
        <authorList>
            <person name="Kitano J."/>
            <person name="Kimura K."/>
            <person name="Yamazaki Y."/>
            <person name="Soda T."/>
            <person name="Shigemoto R."/>
            <person name="Nakajima Y."/>
            <person name="Nakanishi S."/>
        </authorList>
    </citation>
    <scope>INTERACTION WITH TAMALIN</scope>
    <source>
        <tissue>Brain</tissue>
    </source>
</reference>
<reference key="3">
    <citation type="journal article" date="2002" name="Brain Res. Mol. Brain Res.">
        <title>Localization of mRNAs for subfamily of guanine nucleotide-exchange proteins (GEP) for ARFs (ADP-ribosylation factors) in the brain of developing and mature rats under normal and postaxotomy conditions.</title>
        <authorList>
            <person name="Suzuki I."/>
            <person name="Owada Y."/>
            <person name="Suzuki R."/>
            <person name="Yoshimoto T."/>
            <person name="Kondo H."/>
        </authorList>
    </citation>
    <scope>DEVELOPMENTAL STAGE</scope>
</reference>
<organism>
    <name type="scientific">Rattus norvegicus</name>
    <name type="common">Rat</name>
    <dbReference type="NCBI Taxonomy" id="10116"/>
    <lineage>
        <taxon>Eukaryota</taxon>
        <taxon>Metazoa</taxon>
        <taxon>Chordata</taxon>
        <taxon>Craniata</taxon>
        <taxon>Vertebrata</taxon>
        <taxon>Euteleostomi</taxon>
        <taxon>Mammalia</taxon>
        <taxon>Eutheria</taxon>
        <taxon>Euarchontoglires</taxon>
        <taxon>Glires</taxon>
        <taxon>Rodentia</taxon>
        <taxon>Myomorpha</taxon>
        <taxon>Muroidea</taxon>
        <taxon>Muridae</taxon>
        <taxon>Murinae</taxon>
        <taxon>Rattus</taxon>
    </lineage>
</organism>
<gene>
    <name type="primary">Cyth2</name>
    <name type="synonym">Pscd2</name>
    <name type="synonym">Sec7b</name>
</gene>
<evidence type="ECO:0000250" key="1"/>
<evidence type="ECO:0000250" key="2">
    <source>
        <dbReference type="UniProtKB" id="P63034"/>
    </source>
</evidence>
<evidence type="ECO:0000250" key="3">
    <source>
        <dbReference type="UniProtKB" id="Q99418"/>
    </source>
</evidence>
<evidence type="ECO:0000255" key="4"/>
<evidence type="ECO:0000255" key="5">
    <source>
        <dbReference type="PROSITE-ProRule" id="PRU00145"/>
    </source>
</evidence>
<evidence type="ECO:0000255" key="6">
    <source>
        <dbReference type="PROSITE-ProRule" id="PRU00189"/>
    </source>
</evidence>
<evidence type="ECO:0000269" key="7">
    <source>
    </source>
</evidence>
<evidence type="ECO:0000269" key="8">
    <source>
    </source>
</evidence>
<keyword id="KW-0965">Cell junction</keyword>
<keyword id="KW-1003">Cell membrane</keyword>
<keyword id="KW-0966">Cell projection</keyword>
<keyword id="KW-0175">Coiled coil</keyword>
<keyword id="KW-0963">Cytoplasm</keyword>
<keyword id="KW-0344">Guanine-nucleotide releasing factor</keyword>
<keyword id="KW-0446">Lipid-binding</keyword>
<keyword id="KW-0472">Membrane</keyword>
<keyword id="KW-1185">Reference proteome</keyword>
<keyword id="KW-0796">Tight junction</keyword>
<accession>P63035</accession>
<accession>O89099</accession>
<accession>P97695</accession>
<feature type="chain" id="PRO_0000120199" description="Cytohesin-2">
    <location>
        <begin position="1"/>
        <end position="400"/>
    </location>
</feature>
<feature type="domain" description="SEC7" evidence="6">
    <location>
        <begin position="72"/>
        <end position="201"/>
    </location>
</feature>
<feature type="domain" description="PH" evidence="5">
    <location>
        <begin position="259"/>
        <end position="376"/>
    </location>
</feature>
<feature type="region of interest" description="C-terminal autoinhibitory region" evidence="1">
    <location>
        <begin position="387"/>
        <end position="395"/>
    </location>
</feature>
<feature type="coiled-coil region" evidence="4">
    <location>
        <begin position="10"/>
        <end position="67"/>
    </location>
</feature>
<feature type="binding site" evidence="1">
    <location>
        <begin position="268"/>
        <end position="276"/>
    </location>
    <ligand>
        <name>a 1,2-diacyl-sn-glycero-3-phospho-(1D-myo-inositol-3,4,5-trisphosphate)</name>
        <dbReference type="ChEBI" id="CHEBI:57836"/>
    </ligand>
</feature>
<feature type="binding site" evidence="1">
    <location>
        <position position="280"/>
    </location>
    <ligand>
        <name>a 1,2-diacyl-sn-glycero-3-phospho-(1D-myo-inositol-3,4,5-trisphosphate)</name>
        <dbReference type="ChEBI" id="CHEBI:57836"/>
    </ligand>
</feature>
<feature type="binding site" evidence="1">
    <location>
        <position position="291"/>
    </location>
    <ligand>
        <name>a 1,2-diacyl-sn-glycero-3-phospho-(1D-myo-inositol-3,4,5-trisphosphate)</name>
        <dbReference type="ChEBI" id="CHEBI:57836"/>
    </ligand>
</feature>
<feature type="binding site" evidence="1">
    <location>
        <position position="301"/>
    </location>
    <ligand>
        <name>a 1,2-diacyl-sn-glycero-3-phospho-(1D-myo-inositol-3,4,5-trisphosphate)</name>
        <dbReference type="ChEBI" id="CHEBI:57836"/>
    </ligand>
</feature>
<feature type="binding site" evidence="1">
    <location>
        <position position="339"/>
    </location>
    <ligand>
        <name>a 1,2-diacyl-sn-glycero-3-phospho-(1D-myo-inositol-3,4,5-trisphosphate)</name>
        <dbReference type="ChEBI" id="CHEBI:57836"/>
    </ligand>
</feature>
<feature type="binding site" evidence="1">
    <location>
        <position position="350"/>
    </location>
    <ligand>
        <name>a 1,2-diacyl-sn-glycero-3-phospho-(1D-myo-inositol-3,4,5-trisphosphate)</name>
        <dbReference type="ChEBI" id="CHEBI:57836"/>
    </ligand>
</feature>
<feature type="binding site" evidence="1">
    <location>
        <position position="351"/>
    </location>
    <ligand>
        <name>a 1,2-diacyl-sn-glycero-3-phospho-(1D-myo-inositol-3,4,5-trisphosphate)</name>
        <dbReference type="ChEBI" id="CHEBI:57836"/>
    </ligand>
</feature>
<comment type="function">
    <text evidence="2 3">Acts as a guanine-nucleotide exchange factor (GEF). Promotes guanine-nucleotide exchange on ARF1, ARF3 and ARF6. Promotes the activation of ARF factors through replacement of GDP with GTP. The cell membrane form, in association with ARL4 proteins, recruits ARF6 to the plasma membrane (By similarity). Involved in neurite growth (By similarity).</text>
</comment>
<comment type="subunit">
    <text evidence="2 3">Heteromer. Composed of TAMALIN, CYTH2 and at least one GRM1. Interacts with ARRB1. Interacts with ARL4D; the interaction is direct (By similarity). Directly interacts with CCDC120 through the coiled coil domain; this interaction stabilizes CCDC120, possibly by preventing its ubiquitination, and is required for neurite growth in a neuroblastoma cell line. Interacts with FRMD4A (By similarity). Interacts (via N-terminal domain) with INAVA (via N-terminal domain) (By similarity).</text>
</comment>
<comment type="subcellular location">
    <subcellularLocation>
        <location evidence="3">Cell membrane</location>
        <topology evidence="3">Peripheral membrane protein</topology>
    </subcellularLocation>
    <subcellularLocation>
        <location evidence="2">Cytoplasm</location>
    </subcellularLocation>
    <subcellularLocation>
        <location evidence="2">Cell projection</location>
    </subcellularLocation>
    <subcellularLocation>
        <location evidence="2">Cell projection</location>
        <location evidence="2">Growth cone</location>
    </subcellularLocation>
    <subcellularLocation>
        <location evidence="2">Cell junction</location>
        <location evidence="2">Tight junction</location>
    </subcellularLocation>
    <subcellularLocation>
        <location evidence="2">Cell junction</location>
        <location evidence="2">Adherens junction</location>
    </subcellularLocation>
    <text evidence="1 2">Recruited to the cell membrane through its association with ARL4A, ARL4C and ARL4D. Also requires interaction with phosphoinositides for targeting to plasma membrane (By similarity). In differentiating neuroblastoma cells, colocalizes with CCDC120 in both neurite shaft and growth cone areas (By similarity).</text>
</comment>
<comment type="tissue specificity">
    <text evidence="8">Present in all tissues tested, with highest protein levels in brain and adrenal.</text>
</comment>
<comment type="developmental stage">
    <text evidence="7">On embryonic days 15 (15 dpc) and 18 dpc, a weak expression is seen in the mantle and ventricular germinal zones throughout the neuraxis. On postnatal days 0 (P0) and P7, weakly expressed in the gray matter, but not in the white matter, throughout the brain. In the cerebellum, the expression is seen in the external granule cell layer.</text>
</comment>
<comment type="domain">
    <text evidence="1">Binds via its PH domain to the inositol head group of phosphatidylinositol 3,4,5-trisphosphate. The PH domain is necessary and sufficient for plasma membrane relocalization (By similarity).</text>
</comment>
<comment type="domain">
    <text evidence="1">Autoinhibited by its C-terminal basic region.</text>
</comment>
<comment type="domain">
    <text evidence="2">The coiled coil domain is involved in interaction with CCDC120.</text>
</comment>
<dbReference type="EMBL" id="U83896">
    <property type="protein sequence ID" value="AAB41444.1"/>
    <property type="molecule type" value="mRNA"/>
</dbReference>
<dbReference type="RefSeq" id="NP_446363.1">
    <property type="nucleotide sequence ID" value="NM_053911.3"/>
</dbReference>
<dbReference type="BMRB" id="P63035"/>
<dbReference type="SMR" id="P63035"/>
<dbReference type="BioGRID" id="250574">
    <property type="interactions" value="2"/>
</dbReference>
<dbReference type="CORUM" id="P63035"/>
<dbReference type="FunCoup" id="P63035">
    <property type="interactions" value="2372"/>
</dbReference>
<dbReference type="IntAct" id="P63035">
    <property type="interactions" value="2"/>
</dbReference>
<dbReference type="MINT" id="P63035"/>
<dbReference type="STRING" id="10116.ENSRNOP00000028588"/>
<dbReference type="PhosphoSitePlus" id="P63035"/>
<dbReference type="jPOST" id="P63035"/>
<dbReference type="PaxDb" id="10116-ENSRNOP00000028588"/>
<dbReference type="Ensembl" id="ENSRNOT00000028588.7">
    <property type="protein sequence ID" value="ENSRNOP00000028588.6"/>
    <property type="gene ID" value="ENSRNOG00000021051.7"/>
</dbReference>
<dbReference type="GeneID" id="116692"/>
<dbReference type="KEGG" id="rno:116692"/>
<dbReference type="UCSC" id="RGD:620398">
    <property type="organism name" value="rat"/>
</dbReference>
<dbReference type="AGR" id="RGD:620398"/>
<dbReference type="CTD" id="9266"/>
<dbReference type="RGD" id="620398">
    <property type="gene designation" value="Cyth2"/>
</dbReference>
<dbReference type="eggNOG" id="KOG0930">
    <property type="taxonomic scope" value="Eukaryota"/>
</dbReference>
<dbReference type="GeneTree" id="ENSGT00940000160074"/>
<dbReference type="InParanoid" id="P63035"/>
<dbReference type="OrthoDB" id="4579at9989"/>
<dbReference type="PhylomeDB" id="P63035"/>
<dbReference type="Reactome" id="R-RNO-6811438">
    <property type="pathway name" value="Intra-Golgi traffic"/>
</dbReference>
<dbReference type="PRO" id="PR:P63035"/>
<dbReference type="Proteomes" id="UP000002494">
    <property type="component" value="Chromosome 1"/>
</dbReference>
<dbReference type="GO" id="GO:0005912">
    <property type="term" value="C:adherens junction"/>
    <property type="evidence" value="ECO:0007669"/>
    <property type="project" value="UniProtKB-SubCell"/>
</dbReference>
<dbReference type="GO" id="GO:0005923">
    <property type="term" value="C:bicellular tight junction"/>
    <property type="evidence" value="ECO:0000266"/>
    <property type="project" value="RGD"/>
</dbReference>
<dbReference type="GO" id="GO:0005737">
    <property type="term" value="C:cytoplasm"/>
    <property type="evidence" value="ECO:0000250"/>
    <property type="project" value="UniProtKB"/>
</dbReference>
<dbReference type="GO" id="GO:0098892">
    <property type="term" value="C:extrinsic component of postsynaptic specialization membrane"/>
    <property type="evidence" value="ECO:0000314"/>
    <property type="project" value="SynGO"/>
</dbReference>
<dbReference type="GO" id="GO:0098978">
    <property type="term" value="C:glutamatergic synapse"/>
    <property type="evidence" value="ECO:0000266"/>
    <property type="project" value="RGD"/>
</dbReference>
<dbReference type="GO" id="GO:0030426">
    <property type="term" value="C:growth cone"/>
    <property type="evidence" value="ECO:0007669"/>
    <property type="project" value="UniProtKB-SubCell"/>
</dbReference>
<dbReference type="GO" id="GO:0005886">
    <property type="term" value="C:plasma membrane"/>
    <property type="evidence" value="ECO:0000250"/>
    <property type="project" value="UniProtKB"/>
</dbReference>
<dbReference type="GO" id="GO:0098794">
    <property type="term" value="C:postsynapse"/>
    <property type="evidence" value="ECO:0000266"/>
    <property type="project" value="RGD"/>
</dbReference>
<dbReference type="GO" id="GO:0001726">
    <property type="term" value="C:ruffle"/>
    <property type="evidence" value="ECO:0000314"/>
    <property type="project" value="RGD"/>
</dbReference>
<dbReference type="GO" id="GO:0005085">
    <property type="term" value="F:guanyl-nucleotide exchange factor activity"/>
    <property type="evidence" value="ECO:0000250"/>
    <property type="project" value="UniProtKB"/>
</dbReference>
<dbReference type="GO" id="GO:0070679">
    <property type="term" value="F:inositol 1,4,5 trisphosphate binding"/>
    <property type="evidence" value="ECO:0000250"/>
    <property type="project" value="UniProtKB"/>
</dbReference>
<dbReference type="GO" id="GO:0008289">
    <property type="term" value="F:lipid binding"/>
    <property type="evidence" value="ECO:0007669"/>
    <property type="project" value="UniProtKB-KW"/>
</dbReference>
<dbReference type="GO" id="GO:2000171">
    <property type="term" value="P:negative regulation of dendrite development"/>
    <property type="evidence" value="ECO:0000315"/>
    <property type="project" value="RGD"/>
</dbReference>
<dbReference type="GO" id="GO:0032012">
    <property type="term" value="P:regulation of ARF protein signal transduction"/>
    <property type="evidence" value="ECO:0007669"/>
    <property type="project" value="InterPro"/>
</dbReference>
<dbReference type="CDD" id="cd01252">
    <property type="entry name" value="PH_GRP1-like"/>
    <property type="match status" value="1"/>
</dbReference>
<dbReference type="CDD" id="cd00171">
    <property type="entry name" value="Sec7"/>
    <property type="match status" value="1"/>
</dbReference>
<dbReference type="FunFam" id="1.10.1000.11:FF:000002">
    <property type="entry name" value="Cytohesin 1"/>
    <property type="match status" value="1"/>
</dbReference>
<dbReference type="FunFam" id="1.10.220.20:FF:000003">
    <property type="entry name" value="Cytohesin 1"/>
    <property type="match status" value="1"/>
</dbReference>
<dbReference type="FunFam" id="2.30.29.30:FF:000009">
    <property type="entry name" value="Cytohesin 1"/>
    <property type="match status" value="1"/>
</dbReference>
<dbReference type="Gene3D" id="1.10.220.20">
    <property type="match status" value="1"/>
</dbReference>
<dbReference type="Gene3D" id="1.10.1000.11">
    <property type="entry name" value="Arf Nucleotide-binding Site Opener,domain 2"/>
    <property type="match status" value="1"/>
</dbReference>
<dbReference type="Gene3D" id="2.30.29.30">
    <property type="entry name" value="Pleckstrin-homology domain (PH domain)/Phosphotyrosine-binding domain (PTB)"/>
    <property type="match status" value="1"/>
</dbReference>
<dbReference type="InterPro" id="IPR011993">
    <property type="entry name" value="PH-like_dom_sf"/>
</dbReference>
<dbReference type="InterPro" id="IPR001849">
    <property type="entry name" value="PH_domain"/>
</dbReference>
<dbReference type="InterPro" id="IPR023394">
    <property type="entry name" value="Sec7_C_sf"/>
</dbReference>
<dbReference type="InterPro" id="IPR000904">
    <property type="entry name" value="Sec7_dom"/>
</dbReference>
<dbReference type="InterPro" id="IPR035999">
    <property type="entry name" value="Sec7_dom_sf"/>
</dbReference>
<dbReference type="PANTHER" id="PTHR10663:SF343">
    <property type="entry name" value="CYTOHESIN-2"/>
    <property type="match status" value="1"/>
</dbReference>
<dbReference type="PANTHER" id="PTHR10663">
    <property type="entry name" value="GUANYL-NUCLEOTIDE EXCHANGE FACTOR"/>
    <property type="match status" value="1"/>
</dbReference>
<dbReference type="Pfam" id="PF00169">
    <property type="entry name" value="PH"/>
    <property type="match status" value="1"/>
</dbReference>
<dbReference type="Pfam" id="PF01369">
    <property type="entry name" value="Sec7"/>
    <property type="match status" value="1"/>
</dbReference>
<dbReference type="SMART" id="SM00233">
    <property type="entry name" value="PH"/>
    <property type="match status" value="1"/>
</dbReference>
<dbReference type="SMART" id="SM00222">
    <property type="entry name" value="Sec7"/>
    <property type="match status" value="1"/>
</dbReference>
<dbReference type="SUPFAM" id="SSF50729">
    <property type="entry name" value="PH domain-like"/>
    <property type="match status" value="1"/>
</dbReference>
<dbReference type="SUPFAM" id="SSF48425">
    <property type="entry name" value="Sec7 domain"/>
    <property type="match status" value="1"/>
</dbReference>
<dbReference type="PROSITE" id="PS50003">
    <property type="entry name" value="PH_DOMAIN"/>
    <property type="match status" value="1"/>
</dbReference>
<dbReference type="PROSITE" id="PS50190">
    <property type="entry name" value="SEC7"/>
    <property type="match status" value="1"/>
</dbReference>
<proteinExistence type="evidence at protein level"/>